<protein>
    <recommendedName>
        <fullName evidence="1">Adenylate kinase</fullName>
        <shortName evidence="1">AK</shortName>
        <ecNumber evidence="1">2.7.4.3</ecNumber>
    </recommendedName>
    <alternativeName>
        <fullName evidence="1">ATP-AMP transphosphorylase</fullName>
    </alternativeName>
    <alternativeName>
        <fullName evidence="1">ATP:AMP phosphotransferase</fullName>
    </alternativeName>
    <alternativeName>
        <fullName evidence="1">Adenylate monophosphate kinase</fullName>
    </alternativeName>
</protein>
<feature type="chain" id="PRO_0000158844" description="Adenylate kinase">
    <location>
        <begin position="1"/>
        <end position="215"/>
    </location>
</feature>
<feature type="region of interest" description="NMP" evidence="1">
    <location>
        <begin position="30"/>
        <end position="59"/>
    </location>
</feature>
<feature type="region of interest" description="LID" evidence="1">
    <location>
        <begin position="126"/>
        <end position="163"/>
    </location>
</feature>
<feature type="binding site" evidence="1">
    <location>
        <begin position="10"/>
        <end position="15"/>
    </location>
    <ligand>
        <name>ATP</name>
        <dbReference type="ChEBI" id="CHEBI:30616"/>
    </ligand>
</feature>
<feature type="binding site" evidence="1">
    <location>
        <position position="31"/>
    </location>
    <ligand>
        <name>AMP</name>
        <dbReference type="ChEBI" id="CHEBI:456215"/>
    </ligand>
</feature>
<feature type="binding site" evidence="1">
    <location>
        <position position="36"/>
    </location>
    <ligand>
        <name>AMP</name>
        <dbReference type="ChEBI" id="CHEBI:456215"/>
    </ligand>
</feature>
<feature type="binding site" evidence="1">
    <location>
        <begin position="57"/>
        <end position="59"/>
    </location>
    <ligand>
        <name>AMP</name>
        <dbReference type="ChEBI" id="CHEBI:456215"/>
    </ligand>
</feature>
<feature type="binding site" evidence="1">
    <location>
        <begin position="85"/>
        <end position="88"/>
    </location>
    <ligand>
        <name>AMP</name>
        <dbReference type="ChEBI" id="CHEBI:456215"/>
    </ligand>
</feature>
<feature type="binding site" evidence="1">
    <location>
        <position position="92"/>
    </location>
    <ligand>
        <name>AMP</name>
        <dbReference type="ChEBI" id="CHEBI:456215"/>
    </ligand>
</feature>
<feature type="binding site" evidence="1">
    <location>
        <position position="127"/>
    </location>
    <ligand>
        <name>ATP</name>
        <dbReference type="ChEBI" id="CHEBI:30616"/>
    </ligand>
</feature>
<feature type="binding site" evidence="1">
    <location>
        <position position="130"/>
    </location>
    <ligand>
        <name>Zn(2+)</name>
        <dbReference type="ChEBI" id="CHEBI:29105"/>
        <note>structural</note>
    </ligand>
</feature>
<feature type="binding site" evidence="1">
    <location>
        <position position="133"/>
    </location>
    <ligand>
        <name>Zn(2+)</name>
        <dbReference type="ChEBI" id="CHEBI:29105"/>
        <note>structural</note>
    </ligand>
</feature>
<feature type="binding site" evidence="1">
    <location>
        <begin position="136"/>
        <end position="137"/>
    </location>
    <ligand>
        <name>ATP</name>
        <dbReference type="ChEBI" id="CHEBI:30616"/>
    </ligand>
</feature>
<feature type="binding site" evidence="1">
    <location>
        <position position="150"/>
    </location>
    <ligand>
        <name>Zn(2+)</name>
        <dbReference type="ChEBI" id="CHEBI:29105"/>
        <note>structural</note>
    </ligand>
</feature>
<feature type="binding site" evidence="1">
    <location>
        <position position="153"/>
    </location>
    <ligand>
        <name>Zn(2+)</name>
        <dbReference type="ChEBI" id="CHEBI:29105"/>
        <note>structural</note>
    </ligand>
</feature>
<feature type="binding site" evidence="1">
    <location>
        <position position="160"/>
    </location>
    <ligand>
        <name>AMP</name>
        <dbReference type="ChEBI" id="CHEBI:456215"/>
    </ligand>
</feature>
<feature type="binding site" evidence="1">
    <location>
        <position position="171"/>
    </location>
    <ligand>
        <name>AMP</name>
        <dbReference type="ChEBI" id="CHEBI:456215"/>
    </ligand>
</feature>
<feature type="binding site" evidence="1">
    <location>
        <position position="199"/>
    </location>
    <ligand>
        <name>ATP</name>
        <dbReference type="ChEBI" id="CHEBI:30616"/>
    </ligand>
</feature>
<comment type="function">
    <text evidence="1">Catalyzes the reversible transfer of the terminal phosphate group between ATP and AMP. Plays an important role in cellular energy homeostasis and in adenine nucleotide metabolism.</text>
</comment>
<comment type="catalytic activity">
    <reaction evidence="1">
        <text>AMP + ATP = 2 ADP</text>
        <dbReference type="Rhea" id="RHEA:12973"/>
        <dbReference type="ChEBI" id="CHEBI:30616"/>
        <dbReference type="ChEBI" id="CHEBI:456215"/>
        <dbReference type="ChEBI" id="CHEBI:456216"/>
        <dbReference type="EC" id="2.7.4.3"/>
    </reaction>
</comment>
<comment type="pathway">
    <text evidence="1">Purine metabolism; AMP biosynthesis via salvage pathway; AMP from ADP: step 1/1.</text>
</comment>
<comment type="subunit">
    <text evidence="1">Monomer.</text>
</comment>
<comment type="subcellular location">
    <subcellularLocation>
        <location evidence="1">Cytoplasm</location>
    </subcellularLocation>
</comment>
<comment type="domain">
    <text evidence="1">Consists of three domains, a large central CORE domain and two small peripheral domains, NMPbind and LID, which undergo movements during catalysis. The LID domain closes over the site of phosphoryl transfer upon ATP binding. Assembling and dissambling the active center during each catalytic cycle provides an effective means to prevent ATP hydrolysis. Some bacteria have evolved a zinc-coordinating structure that stabilizes the LID domain.</text>
</comment>
<comment type="similarity">
    <text evidence="1">Belongs to the adenylate kinase family.</text>
</comment>
<proteinExistence type="inferred from homology"/>
<keyword id="KW-0067">ATP-binding</keyword>
<keyword id="KW-0963">Cytoplasm</keyword>
<keyword id="KW-0418">Kinase</keyword>
<keyword id="KW-0479">Metal-binding</keyword>
<keyword id="KW-0545">Nucleotide biosynthesis</keyword>
<keyword id="KW-0547">Nucleotide-binding</keyword>
<keyword id="KW-0808">Transferase</keyword>
<keyword id="KW-0862">Zinc</keyword>
<accession>Q5HDX9</accession>
<organism>
    <name type="scientific">Staphylococcus aureus (strain COL)</name>
    <dbReference type="NCBI Taxonomy" id="93062"/>
    <lineage>
        <taxon>Bacteria</taxon>
        <taxon>Bacillati</taxon>
        <taxon>Bacillota</taxon>
        <taxon>Bacilli</taxon>
        <taxon>Bacillales</taxon>
        <taxon>Staphylococcaceae</taxon>
        <taxon>Staphylococcus</taxon>
    </lineage>
</organism>
<gene>
    <name evidence="1" type="primary">adk</name>
    <name type="ordered locus">SACOL2218</name>
</gene>
<evidence type="ECO:0000255" key="1">
    <source>
        <dbReference type="HAMAP-Rule" id="MF_00235"/>
    </source>
</evidence>
<sequence length="215" mass="23974">MNIILMGLPGAGKGTQASEIVKKFPIPHISTGDMFRKAIKEETELGKEAKSYMDRGELVPDEVTVGIVKERISEDDAKKGFLLDGFPRTIEQAEALNNIMSELDRNIDAVINIEVPEEELMNRLTGRRICESCGTTYHLVFNPPKVEGICDIDGGKLYQREDDNPETVANRLSVNIKQSKPILDFYDQKGVLKNIDGSKDISDVTKDVIDILDHL</sequence>
<reference key="1">
    <citation type="journal article" date="2005" name="J. Bacteriol.">
        <title>Insights on evolution of virulence and resistance from the complete genome analysis of an early methicillin-resistant Staphylococcus aureus strain and a biofilm-producing methicillin-resistant Staphylococcus epidermidis strain.</title>
        <authorList>
            <person name="Gill S.R."/>
            <person name="Fouts D.E."/>
            <person name="Archer G.L."/>
            <person name="Mongodin E.F."/>
            <person name="DeBoy R.T."/>
            <person name="Ravel J."/>
            <person name="Paulsen I.T."/>
            <person name="Kolonay J.F."/>
            <person name="Brinkac L.M."/>
            <person name="Beanan M.J."/>
            <person name="Dodson R.J."/>
            <person name="Daugherty S.C."/>
            <person name="Madupu R."/>
            <person name="Angiuoli S.V."/>
            <person name="Durkin A.S."/>
            <person name="Haft D.H."/>
            <person name="Vamathevan J.J."/>
            <person name="Khouri H."/>
            <person name="Utterback T.R."/>
            <person name="Lee C."/>
            <person name="Dimitrov G."/>
            <person name="Jiang L."/>
            <person name="Qin H."/>
            <person name="Weidman J."/>
            <person name="Tran K."/>
            <person name="Kang K.H."/>
            <person name="Hance I.R."/>
            <person name="Nelson K.E."/>
            <person name="Fraser C.M."/>
        </authorList>
    </citation>
    <scope>NUCLEOTIDE SEQUENCE [LARGE SCALE GENOMIC DNA]</scope>
    <source>
        <strain>COL</strain>
    </source>
</reference>
<dbReference type="EC" id="2.7.4.3" evidence="1"/>
<dbReference type="EMBL" id="CP000046">
    <property type="protein sequence ID" value="AAW37093.1"/>
    <property type="molecule type" value="Genomic_DNA"/>
</dbReference>
<dbReference type="RefSeq" id="WP_001021468.1">
    <property type="nucleotide sequence ID" value="NZ_JBGOFO010000004.1"/>
</dbReference>
<dbReference type="SMR" id="Q5HDX9"/>
<dbReference type="KEGG" id="sac:SACOL2218"/>
<dbReference type="HOGENOM" id="CLU_032354_1_2_9"/>
<dbReference type="UniPathway" id="UPA00588">
    <property type="reaction ID" value="UER00649"/>
</dbReference>
<dbReference type="Proteomes" id="UP000000530">
    <property type="component" value="Chromosome"/>
</dbReference>
<dbReference type="GO" id="GO:0005737">
    <property type="term" value="C:cytoplasm"/>
    <property type="evidence" value="ECO:0007669"/>
    <property type="project" value="UniProtKB-SubCell"/>
</dbReference>
<dbReference type="GO" id="GO:0004017">
    <property type="term" value="F:adenylate kinase activity"/>
    <property type="evidence" value="ECO:0007669"/>
    <property type="project" value="UniProtKB-UniRule"/>
</dbReference>
<dbReference type="GO" id="GO:0005524">
    <property type="term" value="F:ATP binding"/>
    <property type="evidence" value="ECO:0007669"/>
    <property type="project" value="UniProtKB-UniRule"/>
</dbReference>
<dbReference type="GO" id="GO:0008270">
    <property type="term" value="F:zinc ion binding"/>
    <property type="evidence" value="ECO:0007669"/>
    <property type="project" value="UniProtKB-UniRule"/>
</dbReference>
<dbReference type="GO" id="GO:0044209">
    <property type="term" value="P:AMP salvage"/>
    <property type="evidence" value="ECO:0007669"/>
    <property type="project" value="UniProtKB-UniRule"/>
</dbReference>
<dbReference type="CDD" id="cd01428">
    <property type="entry name" value="ADK"/>
    <property type="match status" value="1"/>
</dbReference>
<dbReference type="FunFam" id="3.40.50.300:FF:000106">
    <property type="entry name" value="Adenylate kinase mitochondrial"/>
    <property type="match status" value="1"/>
</dbReference>
<dbReference type="Gene3D" id="3.40.50.300">
    <property type="entry name" value="P-loop containing nucleotide triphosphate hydrolases"/>
    <property type="match status" value="1"/>
</dbReference>
<dbReference type="HAMAP" id="MF_00235">
    <property type="entry name" value="Adenylate_kinase_Adk"/>
    <property type="match status" value="1"/>
</dbReference>
<dbReference type="InterPro" id="IPR006259">
    <property type="entry name" value="Adenyl_kin_sub"/>
</dbReference>
<dbReference type="InterPro" id="IPR000850">
    <property type="entry name" value="Adenylat/UMP-CMP_kin"/>
</dbReference>
<dbReference type="InterPro" id="IPR033690">
    <property type="entry name" value="Adenylat_kinase_CS"/>
</dbReference>
<dbReference type="InterPro" id="IPR007862">
    <property type="entry name" value="Adenylate_kinase_lid-dom"/>
</dbReference>
<dbReference type="InterPro" id="IPR008144">
    <property type="entry name" value="Guanylate_kin-like_dom"/>
</dbReference>
<dbReference type="InterPro" id="IPR027417">
    <property type="entry name" value="P-loop_NTPase"/>
</dbReference>
<dbReference type="NCBIfam" id="TIGR01351">
    <property type="entry name" value="adk"/>
    <property type="match status" value="1"/>
</dbReference>
<dbReference type="NCBIfam" id="NF001380">
    <property type="entry name" value="PRK00279.1-2"/>
    <property type="match status" value="1"/>
</dbReference>
<dbReference type="NCBIfam" id="NF001381">
    <property type="entry name" value="PRK00279.1-3"/>
    <property type="match status" value="1"/>
</dbReference>
<dbReference type="NCBIfam" id="NF011100">
    <property type="entry name" value="PRK14527.1"/>
    <property type="match status" value="1"/>
</dbReference>
<dbReference type="PANTHER" id="PTHR23359">
    <property type="entry name" value="NUCLEOTIDE KINASE"/>
    <property type="match status" value="1"/>
</dbReference>
<dbReference type="Pfam" id="PF00406">
    <property type="entry name" value="ADK"/>
    <property type="match status" value="1"/>
</dbReference>
<dbReference type="Pfam" id="PF05191">
    <property type="entry name" value="ADK_lid"/>
    <property type="match status" value="1"/>
</dbReference>
<dbReference type="PRINTS" id="PR00094">
    <property type="entry name" value="ADENYLTKNASE"/>
</dbReference>
<dbReference type="SUPFAM" id="SSF52540">
    <property type="entry name" value="P-loop containing nucleoside triphosphate hydrolases"/>
    <property type="match status" value="1"/>
</dbReference>
<dbReference type="PROSITE" id="PS00113">
    <property type="entry name" value="ADENYLATE_KINASE"/>
    <property type="match status" value="1"/>
</dbReference>
<name>KAD_STAAC</name>